<comment type="function">
    <text evidence="1">Part of the ABC transporter complex BtuCDF involved in vitamin B12 import. Responsible for energy coupling to the transport system.</text>
</comment>
<comment type="catalytic activity">
    <reaction evidence="1">
        <text>an R-cob(III)alamin(out) + ATP + H2O = an R-cob(III)alamin(in) + ADP + phosphate + H(+)</text>
        <dbReference type="Rhea" id="RHEA:17873"/>
        <dbReference type="ChEBI" id="CHEBI:15377"/>
        <dbReference type="ChEBI" id="CHEBI:15378"/>
        <dbReference type="ChEBI" id="CHEBI:30616"/>
        <dbReference type="ChEBI" id="CHEBI:43474"/>
        <dbReference type="ChEBI" id="CHEBI:140785"/>
        <dbReference type="ChEBI" id="CHEBI:456216"/>
        <dbReference type="EC" id="7.6.2.8"/>
    </reaction>
</comment>
<comment type="subunit">
    <text evidence="1">The complex is composed of two ATP-binding proteins (BtuD), two transmembrane proteins (BtuC) and a solute-binding protein (BtuF).</text>
</comment>
<comment type="subcellular location">
    <subcellularLocation>
        <location evidence="1">Cell inner membrane</location>
        <topology evidence="1">Peripheral membrane protein</topology>
    </subcellularLocation>
</comment>
<comment type="similarity">
    <text evidence="1">Belongs to the ABC transporter superfamily. Vitamin B12 importer (TC 3.A.1.13.1) family.</text>
</comment>
<feature type="chain" id="PRO_0000091965" description="Vitamin B12 import ATP-binding protein BtuD">
    <location>
        <begin position="1"/>
        <end position="253"/>
    </location>
</feature>
<feature type="domain" description="ABC transporter" evidence="1">
    <location>
        <begin position="4"/>
        <end position="236"/>
    </location>
</feature>
<feature type="binding site" evidence="1">
    <location>
        <begin position="32"/>
        <end position="39"/>
    </location>
    <ligand>
        <name>ATP</name>
        <dbReference type="ChEBI" id="CHEBI:30616"/>
    </ligand>
</feature>
<feature type="sequence conflict" description="In Ref. 3; AAS62416." evidence="2" ref="3">
    <original>T</original>
    <variation>A</variation>
    <location>
        <position position="250"/>
    </location>
</feature>
<accession>Q8ZDX6</accession>
<accession>Q0WEA2</accession>
<proteinExistence type="inferred from homology"/>
<organism>
    <name type="scientific">Yersinia pestis</name>
    <dbReference type="NCBI Taxonomy" id="632"/>
    <lineage>
        <taxon>Bacteria</taxon>
        <taxon>Pseudomonadati</taxon>
        <taxon>Pseudomonadota</taxon>
        <taxon>Gammaproteobacteria</taxon>
        <taxon>Enterobacterales</taxon>
        <taxon>Yersiniaceae</taxon>
        <taxon>Yersinia</taxon>
    </lineage>
</organism>
<keyword id="KW-0067">ATP-binding</keyword>
<keyword id="KW-0997">Cell inner membrane</keyword>
<keyword id="KW-1003">Cell membrane</keyword>
<keyword id="KW-0472">Membrane</keyword>
<keyword id="KW-0547">Nucleotide-binding</keyword>
<keyword id="KW-1185">Reference proteome</keyword>
<keyword id="KW-1278">Translocase</keyword>
<keyword id="KW-0813">Transport</keyword>
<sequence length="253" mass="27817">MMLLQLNNVSVGTRLASFSSQVTTGLQIHLIGPNGAGKSTLLASLAGLLPASGEIVLAGKSLQHYEGHELARQRAYLSQQQSALSLMPVFQYLSLYQPAGANSQAVATAISYICNKLRLTDKLPRMLSHLSGGEWQRVRLAAVFLQVWPDINPDSKLLLLDEPYSGLDVAQKVALDALLVEFCRSGRSVIISGHDLNHTLQQADEVWLLAQGQVLVQGETQQVMRADVLSQVFEVDFQIHNFNKQQWITTRSV</sequence>
<name>BTUD_YERPE</name>
<protein>
    <recommendedName>
        <fullName evidence="1">Vitamin B12 import ATP-binding protein BtuD</fullName>
        <ecNumber evidence="1">7.6.2.8</ecNumber>
    </recommendedName>
    <alternativeName>
        <fullName evidence="1">Vitamin B12-transporting ATPase</fullName>
    </alternativeName>
</protein>
<reference key="1">
    <citation type="journal article" date="2001" name="Nature">
        <title>Genome sequence of Yersinia pestis, the causative agent of plague.</title>
        <authorList>
            <person name="Parkhill J."/>
            <person name="Wren B.W."/>
            <person name="Thomson N.R."/>
            <person name="Titball R.W."/>
            <person name="Holden M.T.G."/>
            <person name="Prentice M.B."/>
            <person name="Sebaihia M."/>
            <person name="James K.D."/>
            <person name="Churcher C.M."/>
            <person name="Mungall K.L."/>
            <person name="Baker S."/>
            <person name="Basham D."/>
            <person name="Bentley S.D."/>
            <person name="Brooks K."/>
            <person name="Cerdeno-Tarraga A.-M."/>
            <person name="Chillingworth T."/>
            <person name="Cronin A."/>
            <person name="Davies R.M."/>
            <person name="Davis P."/>
            <person name="Dougan G."/>
            <person name="Feltwell T."/>
            <person name="Hamlin N."/>
            <person name="Holroyd S."/>
            <person name="Jagels K."/>
            <person name="Karlyshev A.V."/>
            <person name="Leather S."/>
            <person name="Moule S."/>
            <person name="Oyston P.C.F."/>
            <person name="Quail M.A."/>
            <person name="Rutherford K.M."/>
            <person name="Simmonds M."/>
            <person name="Skelton J."/>
            <person name="Stevens K."/>
            <person name="Whitehead S."/>
            <person name="Barrell B.G."/>
        </authorList>
    </citation>
    <scope>NUCLEOTIDE SEQUENCE [LARGE SCALE GENOMIC DNA]</scope>
    <source>
        <strain>CO-92 / Biovar Orientalis</strain>
    </source>
</reference>
<reference key="2">
    <citation type="journal article" date="2002" name="J. Bacteriol.">
        <title>Genome sequence of Yersinia pestis KIM.</title>
        <authorList>
            <person name="Deng W."/>
            <person name="Burland V."/>
            <person name="Plunkett G. III"/>
            <person name="Boutin A."/>
            <person name="Mayhew G.F."/>
            <person name="Liss P."/>
            <person name="Perna N.T."/>
            <person name="Rose D.J."/>
            <person name="Mau B."/>
            <person name="Zhou S."/>
            <person name="Schwartz D.C."/>
            <person name="Fetherston J.D."/>
            <person name="Lindler L.E."/>
            <person name="Brubaker R.R."/>
            <person name="Plano G.V."/>
            <person name="Straley S.C."/>
            <person name="McDonough K.A."/>
            <person name="Nilles M.L."/>
            <person name="Matson J.S."/>
            <person name="Blattner F.R."/>
            <person name="Perry R.D."/>
        </authorList>
    </citation>
    <scope>NUCLEOTIDE SEQUENCE [LARGE SCALE GENOMIC DNA]</scope>
    <source>
        <strain>KIM10+ / Biovar Mediaevalis</strain>
    </source>
</reference>
<reference key="3">
    <citation type="journal article" date="2004" name="DNA Res.">
        <title>Complete genome sequence of Yersinia pestis strain 91001, an isolate avirulent to humans.</title>
        <authorList>
            <person name="Song Y."/>
            <person name="Tong Z."/>
            <person name="Wang J."/>
            <person name="Wang L."/>
            <person name="Guo Z."/>
            <person name="Han Y."/>
            <person name="Zhang J."/>
            <person name="Pei D."/>
            <person name="Zhou D."/>
            <person name="Qin H."/>
            <person name="Pang X."/>
            <person name="Han Y."/>
            <person name="Zhai J."/>
            <person name="Li M."/>
            <person name="Cui B."/>
            <person name="Qi Z."/>
            <person name="Jin L."/>
            <person name="Dai R."/>
            <person name="Chen F."/>
            <person name="Li S."/>
            <person name="Ye C."/>
            <person name="Du Z."/>
            <person name="Lin W."/>
            <person name="Wang J."/>
            <person name="Yu J."/>
            <person name="Yang H."/>
            <person name="Wang J."/>
            <person name="Huang P."/>
            <person name="Yang R."/>
        </authorList>
    </citation>
    <scope>NUCLEOTIDE SEQUENCE [LARGE SCALE GENOMIC DNA]</scope>
    <source>
        <strain>91001 / Biovar Mediaevalis</strain>
    </source>
</reference>
<dbReference type="EC" id="7.6.2.8" evidence="1"/>
<dbReference type="EMBL" id="AL590842">
    <property type="protein sequence ID" value="CAL21050.1"/>
    <property type="molecule type" value="Genomic_DNA"/>
</dbReference>
<dbReference type="EMBL" id="AE009952">
    <property type="protein sequence ID" value="AAM85483.1"/>
    <property type="molecule type" value="Genomic_DNA"/>
</dbReference>
<dbReference type="EMBL" id="AE017042">
    <property type="protein sequence ID" value="AAS62416.1"/>
    <property type="molecule type" value="Genomic_DNA"/>
</dbReference>
<dbReference type="PIR" id="AG0295">
    <property type="entry name" value="AG0295"/>
</dbReference>
<dbReference type="RefSeq" id="YP_002347386.1">
    <property type="nucleotide sequence ID" value="NC_003143.1"/>
</dbReference>
<dbReference type="SMR" id="Q8ZDX6"/>
<dbReference type="STRING" id="214092.YPO2423"/>
<dbReference type="PaxDb" id="214092-YPO2423"/>
<dbReference type="DNASU" id="1146863"/>
<dbReference type="EnsemblBacteria" id="AAS62416">
    <property type="protein sequence ID" value="AAS62416"/>
    <property type="gene ID" value="YP_2210"/>
</dbReference>
<dbReference type="KEGG" id="ype:YPO2423"/>
<dbReference type="KEGG" id="ypk:y1916"/>
<dbReference type="KEGG" id="ypm:YP_2210"/>
<dbReference type="PATRIC" id="fig|214092.21.peg.2831"/>
<dbReference type="eggNOG" id="COG4138">
    <property type="taxonomic scope" value="Bacteria"/>
</dbReference>
<dbReference type="HOGENOM" id="CLU_000604_1_11_6"/>
<dbReference type="OMA" id="CAHDLNH"/>
<dbReference type="OrthoDB" id="5292475at2"/>
<dbReference type="Proteomes" id="UP000000815">
    <property type="component" value="Chromosome"/>
</dbReference>
<dbReference type="Proteomes" id="UP000001019">
    <property type="component" value="Chromosome"/>
</dbReference>
<dbReference type="Proteomes" id="UP000002490">
    <property type="component" value="Chromosome"/>
</dbReference>
<dbReference type="GO" id="GO:0043190">
    <property type="term" value="C:ATP-binding cassette (ABC) transporter complex"/>
    <property type="evidence" value="ECO:0000318"/>
    <property type="project" value="GO_Central"/>
</dbReference>
<dbReference type="GO" id="GO:0015420">
    <property type="term" value="F:ABC-type vitamin B12 transporter activity"/>
    <property type="evidence" value="ECO:0007669"/>
    <property type="project" value="UniProtKB-UniRule"/>
</dbReference>
<dbReference type="GO" id="GO:0005524">
    <property type="term" value="F:ATP binding"/>
    <property type="evidence" value="ECO:0007669"/>
    <property type="project" value="UniProtKB-KW"/>
</dbReference>
<dbReference type="GO" id="GO:0016887">
    <property type="term" value="F:ATP hydrolysis activity"/>
    <property type="evidence" value="ECO:0007669"/>
    <property type="project" value="InterPro"/>
</dbReference>
<dbReference type="GO" id="GO:0042626">
    <property type="term" value="F:ATPase-coupled transmembrane transporter activity"/>
    <property type="evidence" value="ECO:0000318"/>
    <property type="project" value="GO_Central"/>
</dbReference>
<dbReference type="CDD" id="cd03214">
    <property type="entry name" value="ABC_Iron-Siderophores_B12_Hemin"/>
    <property type="match status" value="1"/>
</dbReference>
<dbReference type="FunFam" id="3.40.50.300:FF:000462">
    <property type="entry name" value="Vitamin B12 import ATP-binding protein BtuD"/>
    <property type="match status" value="1"/>
</dbReference>
<dbReference type="Gene3D" id="3.40.50.300">
    <property type="entry name" value="P-loop containing nucleotide triphosphate hydrolases"/>
    <property type="match status" value="1"/>
</dbReference>
<dbReference type="HAMAP" id="MF_01005">
    <property type="entry name" value="BtuD"/>
    <property type="match status" value="1"/>
</dbReference>
<dbReference type="InterPro" id="IPR003593">
    <property type="entry name" value="AAA+_ATPase"/>
</dbReference>
<dbReference type="InterPro" id="IPR003439">
    <property type="entry name" value="ABC_transporter-like_ATP-bd"/>
</dbReference>
<dbReference type="InterPro" id="IPR017871">
    <property type="entry name" value="ABC_transporter-like_CS"/>
</dbReference>
<dbReference type="InterPro" id="IPR023693">
    <property type="entry name" value="ABC_transptr_BtuD"/>
</dbReference>
<dbReference type="InterPro" id="IPR050153">
    <property type="entry name" value="Metal_Ion_Import_ABC"/>
</dbReference>
<dbReference type="InterPro" id="IPR027417">
    <property type="entry name" value="P-loop_NTPase"/>
</dbReference>
<dbReference type="NCBIfam" id="NF002981">
    <property type="entry name" value="PRK03695.1"/>
    <property type="match status" value="1"/>
</dbReference>
<dbReference type="PANTHER" id="PTHR42734">
    <property type="entry name" value="METAL TRANSPORT SYSTEM ATP-BINDING PROTEIN TM_0124-RELATED"/>
    <property type="match status" value="1"/>
</dbReference>
<dbReference type="PANTHER" id="PTHR42734:SF18">
    <property type="entry name" value="VITAMIN B12 IMPORT ATP-BINDING PROTEIN BTUD"/>
    <property type="match status" value="1"/>
</dbReference>
<dbReference type="Pfam" id="PF00005">
    <property type="entry name" value="ABC_tran"/>
    <property type="match status" value="1"/>
</dbReference>
<dbReference type="SMART" id="SM00382">
    <property type="entry name" value="AAA"/>
    <property type="match status" value="1"/>
</dbReference>
<dbReference type="SUPFAM" id="SSF52540">
    <property type="entry name" value="P-loop containing nucleoside triphosphate hydrolases"/>
    <property type="match status" value="1"/>
</dbReference>
<dbReference type="PROSITE" id="PS00211">
    <property type="entry name" value="ABC_TRANSPORTER_1"/>
    <property type="match status" value="1"/>
</dbReference>
<dbReference type="PROSITE" id="PS50893">
    <property type="entry name" value="ABC_TRANSPORTER_2"/>
    <property type="match status" value="1"/>
</dbReference>
<gene>
    <name evidence="1" type="primary">btuD</name>
    <name type="ordered locus">YPO2423</name>
    <name type="ordered locus">y1916</name>
    <name type="ordered locus">YP_2210</name>
</gene>
<evidence type="ECO:0000255" key="1">
    <source>
        <dbReference type="HAMAP-Rule" id="MF_01005"/>
    </source>
</evidence>
<evidence type="ECO:0000305" key="2"/>